<comment type="function">
    <text evidence="1">Binds together with bS18 to 16S ribosomal RNA.</text>
</comment>
<comment type="similarity">
    <text evidence="1">Belongs to the bacterial ribosomal protein bS6 family.</text>
</comment>
<evidence type="ECO:0000255" key="1">
    <source>
        <dbReference type="HAMAP-Rule" id="MF_00360"/>
    </source>
</evidence>
<evidence type="ECO:0000256" key="2">
    <source>
        <dbReference type="SAM" id="MobiDB-lite"/>
    </source>
</evidence>
<evidence type="ECO:0000305" key="3"/>
<dbReference type="EMBL" id="AM181176">
    <property type="protein sequence ID" value="CAY46806.1"/>
    <property type="molecule type" value="Genomic_DNA"/>
</dbReference>
<dbReference type="RefSeq" id="WP_003236224.1">
    <property type="nucleotide sequence ID" value="NC_012660.1"/>
</dbReference>
<dbReference type="SMR" id="C3KE67"/>
<dbReference type="STRING" id="294.SRM1_00595"/>
<dbReference type="GeneID" id="97923866"/>
<dbReference type="eggNOG" id="COG0360">
    <property type="taxonomic scope" value="Bacteria"/>
</dbReference>
<dbReference type="HOGENOM" id="CLU_113441_6_1_6"/>
<dbReference type="OrthoDB" id="9812702at2"/>
<dbReference type="GO" id="GO:0022627">
    <property type="term" value="C:cytosolic small ribosomal subunit"/>
    <property type="evidence" value="ECO:0007669"/>
    <property type="project" value="TreeGrafter"/>
</dbReference>
<dbReference type="GO" id="GO:0070181">
    <property type="term" value="F:small ribosomal subunit rRNA binding"/>
    <property type="evidence" value="ECO:0007669"/>
    <property type="project" value="TreeGrafter"/>
</dbReference>
<dbReference type="GO" id="GO:0003735">
    <property type="term" value="F:structural constituent of ribosome"/>
    <property type="evidence" value="ECO:0007669"/>
    <property type="project" value="InterPro"/>
</dbReference>
<dbReference type="GO" id="GO:0006412">
    <property type="term" value="P:translation"/>
    <property type="evidence" value="ECO:0007669"/>
    <property type="project" value="UniProtKB-UniRule"/>
</dbReference>
<dbReference type="CDD" id="cd00473">
    <property type="entry name" value="bS6"/>
    <property type="match status" value="1"/>
</dbReference>
<dbReference type="FunFam" id="3.30.70.60:FF:000003">
    <property type="entry name" value="30S ribosomal protein S6"/>
    <property type="match status" value="1"/>
</dbReference>
<dbReference type="Gene3D" id="3.30.70.60">
    <property type="match status" value="1"/>
</dbReference>
<dbReference type="HAMAP" id="MF_00360">
    <property type="entry name" value="Ribosomal_bS6"/>
    <property type="match status" value="1"/>
</dbReference>
<dbReference type="InterPro" id="IPR000529">
    <property type="entry name" value="Ribosomal_bS6"/>
</dbReference>
<dbReference type="InterPro" id="IPR020815">
    <property type="entry name" value="Ribosomal_bS6_CS"/>
</dbReference>
<dbReference type="InterPro" id="IPR035980">
    <property type="entry name" value="Ribosomal_bS6_sf"/>
</dbReference>
<dbReference type="InterPro" id="IPR020814">
    <property type="entry name" value="Ribosomal_S6_plastid/chlpt"/>
</dbReference>
<dbReference type="InterPro" id="IPR014717">
    <property type="entry name" value="Transl_elong_EF1B/ribsomal_bS6"/>
</dbReference>
<dbReference type="NCBIfam" id="TIGR00166">
    <property type="entry name" value="S6"/>
    <property type="match status" value="1"/>
</dbReference>
<dbReference type="PANTHER" id="PTHR21011">
    <property type="entry name" value="MITOCHONDRIAL 28S RIBOSOMAL PROTEIN S6"/>
    <property type="match status" value="1"/>
</dbReference>
<dbReference type="PANTHER" id="PTHR21011:SF1">
    <property type="entry name" value="SMALL RIBOSOMAL SUBUNIT PROTEIN BS6M"/>
    <property type="match status" value="1"/>
</dbReference>
<dbReference type="Pfam" id="PF01250">
    <property type="entry name" value="Ribosomal_S6"/>
    <property type="match status" value="1"/>
</dbReference>
<dbReference type="SUPFAM" id="SSF54995">
    <property type="entry name" value="Ribosomal protein S6"/>
    <property type="match status" value="1"/>
</dbReference>
<dbReference type="PROSITE" id="PS01048">
    <property type="entry name" value="RIBOSOMAL_S6"/>
    <property type="match status" value="1"/>
</dbReference>
<reference key="1">
    <citation type="journal article" date="2009" name="Genome Biol.">
        <title>Genomic and genetic analyses of diversity and plant interactions of Pseudomonas fluorescens.</title>
        <authorList>
            <person name="Silby M.W."/>
            <person name="Cerdeno-Tarraga A.M."/>
            <person name="Vernikos G.S."/>
            <person name="Giddens S.R."/>
            <person name="Jackson R.W."/>
            <person name="Preston G.M."/>
            <person name="Zhang X.-X."/>
            <person name="Moon C.D."/>
            <person name="Gehrig S.M."/>
            <person name="Godfrey S.A.C."/>
            <person name="Knight C.G."/>
            <person name="Malone J.G."/>
            <person name="Robinson Z."/>
            <person name="Spiers A.J."/>
            <person name="Harris S."/>
            <person name="Challis G.L."/>
            <person name="Yaxley A.M."/>
            <person name="Harris D."/>
            <person name="Seeger K."/>
            <person name="Murphy L."/>
            <person name="Rutter S."/>
            <person name="Squares R."/>
            <person name="Quail M.A."/>
            <person name="Saunders E."/>
            <person name="Mavromatis K."/>
            <person name="Brettin T.S."/>
            <person name="Bentley S.D."/>
            <person name="Hothersall J."/>
            <person name="Stephens E."/>
            <person name="Thomas C.M."/>
            <person name="Parkhill J."/>
            <person name="Levy S.B."/>
            <person name="Rainey P.B."/>
            <person name="Thomson N.R."/>
        </authorList>
    </citation>
    <scope>NUCLEOTIDE SEQUENCE [LARGE SCALE GENOMIC DNA]</scope>
    <source>
        <strain>SBW25</strain>
    </source>
</reference>
<accession>C3KE67</accession>
<gene>
    <name evidence="1" type="primary">rpsF</name>
    <name type="ordered locus">PFLU_0533</name>
</gene>
<keyword id="KW-0687">Ribonucleoprotein</keyword>
<keyword id="KW-0689">Ribosomal protein</keyword>
<keyword id="KW-0694">RNA-binding</keyword>
<keyword id="KW-0699">rRNA-binding</keyword>
<organism>
    <name type="scientific">Pseudomonas fluorescens (strain SBW25)</name>
    <dbReference type="NCBI Taxonomy" id="216595"/>
    <lineage>
        <taxon>Bacteria</taxon>
        <taxon>Pseudomonadati</taxon>
        <taxon>Pseudomonadota</taxon>
        <taxon>Gammaproteobacteria</taxon>
        <taxon>Pseudomonadales</taxon>
        <taxon>Pseudomonadaceae</taxon>
        <taxon>Pseudomonas</taxon>
    </lineage>
</organism>
<protein>
    <recommendedName>
        <fullName evidence="1">Small ribosomal subunit protein bS6</fullName>
    </recommendedName>
    <alternativeName>
        <fullName evidence="3">30S ribosomal protein S6</fullName>
    </alternativeName>
</protein>
<name>RS6_PSEFS</name>
<sequence>MRHYEIIFLVHPDQSEQVGGMVERYTKLIEEDGGKIHRLEDWGRRQLAYAINNVHKAHYVMLNVECTGKALAELEDNFRYNDAVIRNLVIRREEAVTGQSEMLKAEENRSERRERRDRPEHEGADSADSDDSDNSDNADE</sequence>
<proteinExistence type="inferred from homology"/>
<feature type="chain" id="PRO_1000205404" description="Small ribosomal subunit protein bS6">
    <location>
        <begin position="1"/>
        <end position="140"/>
    </location>
</feature>
<feature type="region of interest" description="Disordered" evidence="2">
    <location>
        <begin position="96"/>
        <end position="140"/>
    </location>
</feature>
<feature type="compositionally biased region" description="Basic and acidic residues" evidence="2">
    <location>
        <begin position="103"/>
        <end position="124"/>
    </location>
</feature>
<feature type="compositionally biased region" description="Acidic residues" evidence="2">
    <location>
        <begin position="125"/>
        <end position="140"/>
    </location>
</feature>